<organism>
    <name type="scientific">Hyalophora cecropia</name>
    <name type="common">Cecropia moth</name>
    <name type="synonym">Samia cecropia</name>
    <dbReference type="NCBI Taxonomy" id="7123"/>
    <lineage>
        <taxon>Eukaryota</taxon>
        <taxon>Metazoa</taxon>
        <taxon>Ecdysozoa</taxon>
        <taxon>Arthropoda</taxon>
        <taxon>Hexapoda</taxon>
        <taxon>Insecta</taxon>
        <taxon>Pterygota</taxon>
        <taxon>Neoptera</taxon>
        <taxon>Endopterygota</taxon>
        <taxon>Lepidoptera</taxon>
        <taxon>Glossata</taxon>
        <taxon>Ditrysia</taxon>
        <taxon>Bombycoidea</taxon>
        <taxon>Saturniidae</taxon>
        <taxon>Saturniinae</taxon>
        <taxon>Attacini</taxon>
        <taxon>Hyalophora</taxon>
    </lineage>
</organism>
<dbReference type="GO" id="GO:0007608">
    <property type="term" value="P:sensory perception of smell"/>
    <property type="evidence" value="ECO:0007669"/>
    <property type="project" value="UniProtKB-KW"/>
</dbReference>
<keyword id="KW-0903">Direct protein sequencing</keyword>
<keyword id="KW-0552">Olfaction</keyword>
<keyword id="KW-0716">Sensory transduction</keyword>
<keyword id="KW-0813">Transport</keyword>
<protein>
    <recommendedName>
        <fullName>General odorant-binding protein</fullName>
        <shortName>GOBP</shortName>
    </recommendedName>
</protein>
<accession>P34172</accession>
<name>OBP_HYACE</name>
<sequence>TAEVMSXVTAXFGXALXE</sequence>
<comment type="function">
    <text>Present in the aqueous fluid surrounding olfactory sensory dendrites and are thought to aid in the capture and transport of hydrophobic odorants into and through this fluid.</text>
</comment>
<comment type="subunit">
    <text evidence="1">Homodimer.</text>
</comment>
<comment type="tissue specificity">
    <text>Antenna.</text>
</comment>
<comment type="similarity">
    <text evidence="1">Belongs to the PBP/GOBP family.</text>
</comment>
<proteinExistence type="evidence at protein level"/>
<feature type="chain" id="PRO_0000074484" description="General odorant-binding protein">
    <location>
        <begin position="1"/>
        <end position="18" status="greater than"/>
    </location>
</feature>
<feature type="non-terminal residue">
    <location>
        <position position="18"/>
    </location>
</feature>
<reference key="1">
    <citation type="journal article" date="1991" name="J. Neurobiol.">
        <title>Odorant-binding-protein subfamilies associate with distinct classes of olfactory receptor neurons in insects.</title>
        <authorList>
            <person name="Vogt R.G."/>
            <person name="Prestwich G.D."/>
            <person name="Lerner M.R."/>
        </authorList>
    </citation>
    <scope>PROTEIN SEQUENCE</scope>
</reference>
<evidence type="ECO:0000305" key="1"/>